<name>TFRB_METTM</name>
<gene>
    <name evidence="6" type="primary">tfrB</name>
    <name evidence="8" type="ordered locus">MTBMA_c04210</name>
</gene>
<keyword id="KW-0001">2Fe-2S</keyword>
<keyword id="KW-0004">4Fe-4S</keyword>
<keyword id="KW-0963">Cytoplasm</keyword>
<keyword id="KW-0903">Direct protein sequencing</keyword>
<keyword id="KW-0408">Iron</keyword>
<keyword id="KW-0411">Iron-sulfur</keyword>
<keyword id="KW-0479">Metal-binding</keyword>
<keyword id="KW-0560">Oxidoreductase</keyword>
<keyword id="KW-0677">Repeat</keyword>
<protein>
    <recommendedName>
        <fullName evidence="7">Fumarate reductase (CoM/CoB) subunit B</fullName>
        <ecNumber evidence="4">1.3.4.1</ecNumber>
    </recommendedName>
    <alternativeName>
        <fullName evidence="6">Thiol:fumarate reductase subunit B</fullName>
    </alternativeName>
</protein>
<comment type="function">
    <text evidence="4">Catalyzes the reduction of fumarate with reduced coenzyme M (CoM-S-H) and coenzyme B (CoB-S-H). In vitro, is able to reduces fumarate with reduced benzyl viologen, oxidize CoM-S-H and CoB-S-H to CoM-S-S-CoB with methylene blue, and reduce CoM-S-S-CoB with reduced benzyl viologen. The enzyme has specificity for the two thiol compounds as the CoB--CoM heterodisulfide reductase. The enzyme is very sensitive to oxygen.</text>
</comment>
<comment type="catalytic activity">
    <reaction evidence="4">
        <text>coenzyme B + coenzyme M + fumarate = coenzyme M-coenzyme B heterodisulfide + succinate</text>
        <dbReference type="Rhea" id="RHEA:40235"/>
        <dbReference type="ChEBI" id="CHEBI:29806"/>
        <dbReference type="ChEBI" id="CHEBI:30031"/>
        <dbReference type="ChEBI" id="CHEBI:58319"/>
        <dbReference type="ChEBI" id="CHEBI:58411"/>
        <dbReference type="ChEBI" id="CHEBI:58596"/>
        <dbReference type="EC" id="1.3.4.1"/>
    </reaction>
</comment>
<comment type="cofactor">
    <cofactor evidence="4">
        <name>[2Fe-2S] cluster</name>
        <dbReference type="ChEBI" id="CHEBI:190135"/>
    </cofactor>
    <text evidence="4">Binds 1 [2Fe-2S] cluster per subunit.</text>
</comment>
<comment type="cofactor">
    <cofactor evidence="4">
        <name>[4Fe-4S] cluster</name>
        <dbReference type="ChEBI" id="CHEBI:49883"/>
    </cofactor>
    <text evidence="4">Binds 2 [4Fe-4S] clusters per subunit.</text>
</comment>
<comment type="biophysicochemical properties">
    <kinetics>
        <KM evidence="3">0.2 mM for fumarate</KM>
    </kinetics>
    <phDependence>
        <text evidence="3">Optimum pH is7.0.</text>
    </phDependence>
    <temperatureDependence>
        <text evidence="3">Optimum temperature is 75 degrees Celsius.</text>
    </temperatureDependence>
</comment>
<comment type="subunit">
    <text evidence="4">Subunit B of the heterodimeric fumarate reductase of methanogenic Archaea, composed of subunits A (TfrA) and B (TfrB).</text>
</comment>
<comment type="subcellular location">
    <subcellularLocation>
        <location evidence="5">Cytoplasm</location>
    </subcellularLocation>
</comment>
<organism evidence="8">
    <name type="scientific">Methanothermobacter marburgensis (strain ATCC BAA-927 / DSM 2133 / JCM 14651 / NBRC 100331 / OCM 82 / Marburg)</name>
    <name type="common">Methanobacterium thermoautotrophicum</name>
    <dbReference type="NCBI Taxonomy" id="79929"/>
    <lineage>
        <taxon>Archaea</taxon>
        <taxon>Methanobacteriati</taxon>
        <taxon>Methanobacteriota</taxon>
        <taxon>Methanomada group</taxon>
        <taxon>Methanobacteria</taxon>
        <taxon>Methanobacteriales</taxon>
        <taxon>Methanobacteriaceae</taxon>
        <taxon>Methanothermobacter</taxon>
    </lineage>
</organism>
<feature type="chain" id="PRO_0000430754" description="Fumarate reductase (CoM/CoB) subunit B">
    <location>
        <begin position="1"/>
        <end position="489"/>
    </location>
</feature>
<feature type="domain" description="2Fe-2S ferredoxin-type" evidence="1">
    <location>
        <begin position="2"/>
        <end position="89"/>
    </location>
</feature>
<feature type="domain" description="4Fe-4S ferredoxin-type 1" evidence="2">
    <location>
        <begin position="124"/>
        <end position="158"/>
    </location>
</feature>
<feature type="domain" description="4Fe-4S ferredoxin-type 2" evidence="2">
    <location>
        <begin position="178"/>
        <end position="209"/>
    </location>
</feature>
<feature type="binding site" evidence="1">
    <location>
        <position position="53"/>
    </location>
    <ligand>
        <name>[2Fe-2S] cluster</name>
        <dbReference type="ChEBI" id="CHEBI:190135"/>
    </ligand>
</feature>
<feature type="binding site" evidence="1">
    <location>
        <position position="58"/>
    </location>
    <ligand>
        <name>[2Fe-2S] cluster</name>
        <dbReference type="ChEBI" id="CHEBI:190135"/>
    </ligand>
</feature>
<feature type="binding site" evidence="1">
    <location>
        <position position="61"/>
    </location>
    <ligand>
        <name>[2Fe-2S] cluster</name>
        <dbReference type="ChEBI" id="CHEBI:190135"/>
    </ligand>
</feature>
<feature type="binding site" evidence="1">
    <location>
        <position position="73"/>
    </location>
    <ligand>
        <name>[2Fe-2S] cluster</name>
        <dbReference type="ChEBI" id="CHEBI:190135"/>
    </ligand>
</feature>
<feature type="binding site" evidence="2">
    <location>
        <position position="136"/>
    </location>
    <ligand>
        <name>[4Fe-4S] cluster</name>
        <dbReference type="ChEBI" id="CHEBI:49883"/>
        <label>1</label>
    </ligand>
</feature>
<feature type="binding site" evidence="2">
    <location>
        <position position="139"/>
    </location>
    <ligand>
        <name>[4Fe-4S] cluster</name>
        <dbReference type="ChEBI" id="CHEBI:49883"/>
        <label>1</label>
    </ligand>
</feature>
<feature type="binding site" evidence="2">
    <location>
        <position position="142"/>
    </location>
    <ligand>
        <name>[4Fe-4S] cluster</name>
        <dbReference type="ChEBI" id="CHEBI:49883"/>
        <label>1</label>
    </ligand>
</feature>
<feature type="binding site" evidence="2">
    <location>
        <position position="146"/>
    </location>
    <ligand>
        <name>[4Fe-4S] cluster</name>
        <dbReference type="ChEBI" id="CHEBI:49883"/>
        <label>1</label>
    </ligand>
</feature>
<feature type="binding site" evidence="2">
    <location>
        <position position="189"/>
    </location>
    <ligand>
        <name>[4Fe-4S] cluster</name>
        <dbReference type="ChEBI" id="CHEBI:49883"/>
        <label>2</label>
    </ligand>
</feature>
<feature type="binding site" evidence="2">
    <location>
        <position position="192"/>
    </location>
    <ligand>
        <name>[4Fe-4S] cluster</name>
        <dbReference type="ChEBI" id="CHEBI:49883"/>
        <label>2</label>
    </ligand>
</feature>
<feature type="binding site" evidence="2">
    <location>
        <position position="195"/>
    </location>
    <ligand>
        <name>[4Fe-4S] cluster</name>
        <dbReference type="ChEBI" id="CHEBI:49883"/>
        <label>2</label>
    </ligand>
</feature>
<feature type="binding site" evidence="2">
    <location>
        <position position="199"/>
    </location>
    <ligand>
        <name>[4Fe-4S] cluster</name>
        <dbReference type="ChEBI" id="CHEBI:49883"/>
        <label>2</label>
    </ligand>
</feature>
<feature type="sequence conflict" description="In Ref. 1; CAA04399." ref="1">
    <original>L</original>
    <variation>V</variation>
    <location>
        <position position="445"/>
    </location>
</feature>
<feature type="sequence conflict" description="In Ref. 1; CAA04399." ref="1">
    <original>K</original>
    <variation>M</variation>
    <location>
        <position position="467"/>
    </location>
</feature>
<feature type="sequence conflict" description="In Ref. 1; CAA04399." ref="1">
    <original>SDD</original>
    <variation>ND</variation>
    <location>
        <begin position="487"/>
        <end position="489"/>
    </location>
</feature>
<sequence>MINVKVLRFEPGVDEKPHLESYDIPSKEKMKVLDALQLINKMYNANIAFRSSCRAGQCGSCAVKMNGEVVLACRAEVEDGAVIEPVDLPVIKDLMVDRSEIEDKVRAMGLYLQSEARGIQRIKPEDYQDTKKLRGCIECFSCISSCPVIKESTEYAGPYFMRYISKFAFDPRDEAERAAGGVEEGLYCCTTCGKCAEVCPKELNVPGDAIEKLRAMACREGAGPLDAHRKIKKLISETGRSVDHIGKGFIESVGQNPGSRIGFFTGCLVDYRMPDVGMALLRVLREHGFEVDVPDGQVCCGSPMIRTGQLDIVEDLVERNRRALEGYDTIITVCAGCGATLKKDYPRYGVELNVLDISEFLADRIDDIKMKPVNMRVTYHDPCHLLRGQGVKLEPRKILNSIPGLEFVEMEKQGQCCGSGGGVKSGKPEIAESLGKKKAEMIRKLNVDAVITICPFCQLHIKDSLEKEGLGDVKVMNILELLDMAYSDD</sequence>
<evidence type="ECO:0000255" key="1">
    <source>
        <dbReference type="PROSITE-ProRule" id="PRU00465"/>
    </source>
</evidence>
<evidence type="ECO:0000255" key="2">
    <source>
        <dbReference type="PROSITE-ProRule" id="PRU00711"/>
    </source>
</evidence>
<evidence type="ECO:0000269" key="3">
    <source>
    </source>
</evidence>
<evidence type="ECO:0000269" key="4">
    <source>
    </source>
</evidence>
<evidence type="ECO:0000303" key="5">
    <source>
    </source>
</evidence>
<evidence type="ECO:0000303" key="6">
    <source>
    </source>
</evidence>
<evidence type="ECO:0000305" key="7"/>
<evidence type="ECO:0000312" key="8">
    <source>
        <dbReference type="EMBL" id="ADL58022.1"/>
    </source>
</evidence>
<reference key="1">
    <citation type="journal article" date="1998" name="Eur. J. Biochem.">
        <title>Thiol:fumarate reductase (Tfr) from Methanobacterium thermoautotrophicum--identification of the catalytic sites for fumarate reduction and thiol oxidation.</title>
        <authorList>
            <person name="Heim S."/>
            <person name="Kunkel A."/>
            <person name="Thauer R.K."/>
            <person name="Hedderich R."/>
        </authorList>
    </citation>
    <scope>NUCLEOTIDE SEQUENCE [GENOMIC DNA]</scope>
    <scope>PROTEIN SEQUENCE OF 1-20 AND 398-412</scope>
    <scope>FUNCTION</scope>
    <scope>CATALYTIC ACTIVITY</scope>
    <scope>COFACTOR</scope>
    <scope>SUBUNIT</scope>
    <source>
        <strain>ATCC BAA-927 / DSM 2133 / JCM 14651 / NBRC 100331 / OCM 82 / Marburg</strain>
    </source>
</reference>
<reference key="2">
    <citation type="journal article" date="2010" name="J. Bacteriol.">
        <title>Complete genome sequence of Methanothermobacter marburgensis, a methanoarchaeon model organism.</title>
        <authorList>
            <person name="Liesegang H."/>
            <person name="Kaster A.K."/>
            <person name="Wiezer A."/>
            <person name="Goenrich M."/>
            <person name="Wollherr A."/>
            <person name="Seedorf H."/>
            <person name="Gottschalk G."/>
            <person name="Thauer R.K."/>
        </authorList>
    </citation>
    <scope>NUCLEOTIDE SEQUENCE [LARGE SCALE GENOMIC DNA]</scope>
    <source>
        <strain evidence="8">ATCC BAA-927 / DSM 2133 / JCM 14651 / NBRC 100331 / OCM 82 / Marburg</strain>
    </source>
</reference>
<reference key="3">
    <citation type="journal article" date="1989" name="Appl. Environ. Microbiol.">
        <title>Purification and characterization of an anabolic fumarate reductase from Methanobacterium thermoautotrophicum.</title>
        <authorList>
            <person name="Khandekar S.S."/>
            <person name="Eirich L.D."/>
        </authorList>
    </citation>
    <scope>BIOPHYSICOCHEMICAL PROPERTIES</scope>
    <scope>SUBCELLULAR LOCATION</scope>
</reference>
<proteinExistence type="evidence at protein level"/>
<accession>D9PUX5</accession>
<accession>O53142</accession>
<dbReference type="EC" id="1.3.4.1" evidence="4"/>
<dbReference type="EMBL" id="AJ000942">
    <property type="protein sequence ID" value="CAA04399.1"/>
    <property type="molecule type" value="Genomic_DNA"/>
</dbReference>
<dbReference type="EMBL" id="CP001710">
    <property type="protein sequence ID" value="ADL58022.1"/>
    <property type="molecule type" value="Genomic_DNA"/>
</dbReference>
<dbReference type="RefSeq" id="WP_013295248.1">
    <property type="nucleotide sequence ID" value="NC_014408.1"/>
</dbReference>
<dbReference type="SMR" id="D9PUX5"/>
<dbReference type="STRING" id="79929.MTBMA_c04210"/>
<dbReference type="PaxDb" id="79929-MTBMA_c04210"/>
<dbReference type="GeneID" id="41326657"/>
<dbReference type="GeneID" id="9704127"/>
<dbReference type="KEGG" id="mmg:MTBMA_c04210"/>
<dbReference type="PATRIC" id="fig|79929.8.peg.410"/>
<dbReference type="HOGENOM" id="CLU_023081_2_0_2"/>
<dbReference type="OrthoDB" id="42878at2157"/>
<dbReference type="Proteomes" id="UP000000345">
    <property type="component" value="Chromosome"/>
</dbReference>
<dbReference type="GO" id="GO:0005737">
    <property type="term" value="C:cytoplasm"/>
    <property type="evidence" value="ECO:0007669"/>
    <property type="project" value="UniProtKB-SubCell"/>
</dbReference>
<dbReference type="GO" id="GO:0051537">
    <property type="term" value="F:2 iron, 2 sulfur cluster binding"/>
    <property type="evidence" value="ECO:0007669"/>
    <property type="project" value="UniProtKB-KW"/>
</dbReference>
<dbReference type="GO" id="GO:0051539">
    <property type="term" value="F:4 iron, 4 sulfur cluster binding"/>
    <property type="evidence" value="ECO:0007669"/>
    <property type="project" value="UniProtKB-KW"/>
</dbReference>
<dbReference type="GO" id="GO:0009055">
    <property type="term" value="F:electron transfer activity"/>
    <property type="evidence" value="ECO:0007669"/>
    <property type="project" value="InterPro"/>
</dbReference>
<dbReference type="GO" id="GO:0051536">
    <property type="term" value="F:iron-sulfur cluster binding"/>
    <property type="evidence" value="ECO:0000314"/>
    <property type="project" value="UniProtKB"/>
</dbReference>
<dbReference type="GO" id="GO:0046872">
    <property type="term" value="F:metal ion binding"/>
    <property type="evidence" value="ECO:0007669"/>
    <property type="project" value="UniProtKB-KW"/>
</dbReference>
<dbReference type="GO" id="GO:0016627">
    <property type="term" value="F:oxidoreductase activity, acting on the CH-CH group of donors"/>
    <property type="evidence" value="ECO:0000314"/>
    <property type="project" value="UniProtKB"/>
</dbReference>
<dbReference type="GO" id="GO:0006106">
    <property type="term" value="P:fumarate metabolic process"/>
    <property type="evidence" value="ECO:0000314"/>
    <property type="project" value="UniProtKB"/>
</dbReference>
<dbReference type="GO" id="GO:0006099">
    <property type="term" value="P:tricarboxylic acid cycle"/>
    <property type="evidence" value="ECO:0007669"/>
    <property type="project" value="InterPro"/>
</dbReference>
<dbReference type="CDD" id="cd00207">
    <property type="entry name" value="fer2"/>
    <property type="match status" value="1"/>
</dbReference>
<dbReference type="FunFam" id="1.10.1060.10:FF:000003">
    <property type="entry name" value="Succinate dehydrogenase iron-sulfur subunit"/>
    <property type="match status" value="1"/>
</dbReference>
<dbReference type="Gene3D" id="3.10.20.30">
    <property type="match status" value="1"/>
</dbReference>
<dbReference type="Gene3D" id="1.10.1060.10">
    <property type="entry name" value="Alpha-helical ferredoxin"/>
    <property type="match status" value="1"/>
</dbReference>
<dbReference type="InterPro" id="IPR036010">
    <property type="entry name" value="2Fe-2S_ferredoxin-like_sf"/>
</dbReference>
<dbReference type="InterPro" id="IPR001041">
    <property type="entry name" value="2Fe-2S_ferredoxin-type"/>
</dbReference>
<dbReference type="InterPro" id="IPR006058">
    <property type="entry name" value="2Fe2S_fd_BS"/>
</dbReference>
<dbReference type="InterPro" id="IPR017896">
    <property type="entry name" value="4Fe4S_Fe-S-bd"/>
</dbReference>
<dbReference type="InterPro" id="IPR017900">
    <property type="entry name" value="4Fe4S_Fe_S_CS"/>
</dbReference>
<dbReference type="InterPro" id="IPR012675">
    <property type="entry name" value="Beta-grasp_dom_sf"/>
</dbReference>
<dbReference type="InterPro" id="IPR004017">
    <property type="entry name" value="Cys_rich_dom"/>
</dbReference>
<dbReference type="InterPro" id="IPR009051">
    <property type="entry name" value="Helical_ferredxn"/>
</dbReference>
<dbReference type="InterPro" id="IPR004489">
    <property type="entry name" value="Succ_DH/fum_Rdtase_Fe-S"/>
</dbReference>
<dbReference type="InterPro" id="IPR025192">
    <property type="entry name" value="Succ_DH/fum_Rdtase_N"/>
</dbReference>
<dbReference type="NCBIfam" id="TIGR00384">
    <property type="entry name" value="dhsB"/>
    <property type="match status" value="1"/>
</dbReference>
<dbReference type="NCBIfam" id="NF004898">
    <property type="entry name" value="PRK06259.1"/>
    <property type="match status" value="1"/>
</dbReference>
<dbReference type="PANTHER" id="PTHR32479">
    <property type="entry name" value="GLYCOLATE OXIDASE IRON-SULFUR SUBUNIT"/>
    <property type="match status" value="1"/>
</dbReference>
<dbReference type="PANTHER" id="PTHR32479:SF17">
    <property type="entry name" value="GLYCOLATE OXIDASE IRON-SULFUR SUBUNIT"/>
    <property type="match status" value="1"/>
</dbReference>
<dbReference type="Pfam" id="PF02754">
    <property type="entry name" value="CCG"/>
    <property type="match status" value="2"/>
</dbReference>
<dbReference type="Pfam" id="PF13085">
    <property type="entry name" value="Fer2_3"/>
    <property type="match status" value="1"/>
</dbReference>
<dbReference type="Pfam" id="PF13183">
    <property type="entry name" value="Fer4_8"/>
    <property type="match status" value="1"/>
</dbReference>
<dbReference type="SUPFAM" id="SSF54292">
    <property type="entry name" value="2Fe-2S ferredoxin-like"/>
    <property type="match status" value="1"/>
</dbReference>
<dbReference type="SUPFAM" id="SSF46548">
    <property type="entry name" value="alpha-helical ferredoxin"/>
    <property type="match status" value="1"/>
</dbReference>
<dbReference type="PROSITE" id="PS00197">
    <property type="entry name" value="2FE2S_FER_1"/>
    <property type="match status" value="1"/>
</dbReference>
<dbReference type="PROSITE" id="PS51085">
    <property type="entry name" value="2FE2S_FER_2"/>
    <property type="match status" value="1"/>
</dbReference>
<dbReference type="PROSITE" id="PS00198">
    <property type="entry name" value="4FE4S_FER_1"/>
    <property type="match status" value="2"/>
</dbReference>
<dbReference type="PROSITE" id="PS51379">
    <property type="entry name" value="4FE4S_FER_2"/>
    <property type="match status" value="2"/>
</dbReference>